<comment type="function">
    <text evidence="1">Key component of the proton channel; it plays a direct role in the translocation of protons across the membrane.</text>
</comment>
<comment type="subunit">
    <text evidence="1">F-type ATPases have 2 components, CF(1) - the catalytic core - and CF(0) - the membrane proton channel. CF(1) has five subunits: alpha(3), beta(3), gamma(1), delta(1), epsilon(1). CF(0) has three main subunits: a(1), b(2) and c(9-12). The alpha and beta chains form an alternating ring which encloses part of the gamma chain. CF(1) is attached to CF(0) by a central stalk formed by the gamma and epsilon chains, while a peripheral stalk is formed by the delta and b chains.</text>
</comment>
<comment type="subcellular location">
    <subcellularLocation>
        <location evidence="1">Cell membrane</location>
        <topology evidence="1">Multi-pass membrane protein</topology>
    </subcellularLocation>
</comment>
<comment type="similarity">
    <text evidence="1">Belongs to the ATPase A chain family.</text>
</comment>
<proteinExistence type="inferred from homology"/>
<evidence type="ECO:0000255" key="1">
    <source>
        <dbReference type="HAMAP-Rule" id="MF_01393"/>
    </source>
</evidence>
<gene>
    <name evidence="1" type="primary">atpB</name>
    <name type="ordered locus">Franean1_1018</name>
</gene>
<name>ATP6_PARS2</name>
<accession>A8L3V9</accession>
<organism>
    <name type="scientific">Parafrankia sp. (strain EAN1pec)</name>
    <dbReference type="NCBI Taxonomy" id="298653"/>
    <lineage>
        <taxon>Bacteria</taxon>
        <taxon>Bacillati</taxon>
        <taxon>Actinomycetota</taxon>
        <taxon>Actinomycetes</taxon>
        <taxon>Frankiales</taxon>
        <taxon>Frankiaceae</taxon>
        <taxon>Parafrankia</taxon>
    </lineage>
</organism>
<sequence>MPSGSVLMAADDGFHGPTPDVFKPKSWFEFDLGPIDFYFNKWSALTLFVALFVGGFLWLGFRKATLVPRGLQNFCESIYDFVDLQIAQNVIGERGRTFSPYLTILFCFILVSNVMAVIPVAQFPTTSRIALPMILAAVSWFIFNIVGIREHGAGTYFKDMLVPAPTAPLFVKVILAPIEFVSTMIARPATLAIRLFANMFAGHMLLLVFALGADYLLPKPQFVFGLVSGLMAIALTLFELMIDVLQAYIFTVLTAAYIGGAISSHGGGDHAADHSPIHGHETSAPVTAAGAVARA</sequence>
<protein>
    <recommendedName>
        <fullName evidence="1">ATP synthase subunit a</fullName>
    </recommendedName>
    <alternativeName>
        <fullName evidence="1">ATP synthase F0 sector subunit a</fullName>
    </alternativeName>
    <alternativeName>
        <fullName evidence="1">F-ATPase subunit 6</fullName>
    </alternativeName>
</protein>
<keyword id="KW-0066">ATP synthesis</keyword>
<keyword id="KW-1003">Cell membrane</keyword>
<keyword id="KW-0138">CF(0)</keyword>
<keyword id="KW-0375">Hydrogen ion transport</keyword>
<keyword id="KW-0406">Ion transport</keyword>
<keyword id="KW-0472">Membrane</keyword>
<keyword id="KW-0812">Transmembrane</keyword>
<keyword id="KW-1133">Transmembrane helix</keyword>
<keyword id="KW-0813">Transport</keyword>
<dbReference type="EMBL" id="CP000820">
    <property type="protein sequence ID" value="ABW10474.1"/>
    <property type="molecule type" value="Genomic_DNA"/>
</dbReference>
<dbReference type="RefSeq" id="WP_020458656.1">
    <property type="nucleotide sequence ID" value="NC_009921.1"/>
</dbReference>
<dbReference type="SMR" id="A8L3V9"/>
<dbReference type="STRING" id="298653.Franean1_1018"/>
<dbReference type="KEGG" id="fre:Franean1_1018"/>
<dbReference type="eggNOG" id="COG0356">
    <property type="taxonomic scope" value="Bacteria"/>
</dbReference>
<dbReference type="HOGENOM" id="CLU_041018_0_1_11"/>
<dbReference type="GO" id="GO:0005886">
    <property type="term" value="C:plasma membrane"/>
    <property type="evidence" value="ECO:0007669"/>
    <property type="project" value="UniProtKB-SubCell"/>
</dbReference>
<dbReference type="GO" id="GO:0045259">
    <property type="term" value="C:proton-transporting ATP synthase complex"/>
    <property type="evidence" value="ECO:0007669"/>
    <property type="project" value="UniProtKB-KW"/>
</dbReference>
<dbReference type="GO" id="GO:0046933">
    <property type="term" value="F:proton-transporting ATP synthase activity, rotational mechanism"/>
    <property type="evidence" value="ECO:0007669"/>
    <property type="project" value="UniProtKB-UniRule"/>
</dbReference>
<dbReference type="CDD" id="cd00310">
    <property type="entry name" value="ATP-synt_Fo_a_6"/>
    <property type="match status" value="1"/>
</dbReference>
<dbReference type="Gene3D" id="1.20.120.220">
    <property type="entry name" value="ATP synthase, F0 complex, subunit A"/>
    <property type="match status" value="1"/>
</dbReference>
<dbReference type="HAMAP" id="MF_01393">
    <property type="entry name" value="ATP_synth_a_bact"/>
    <property type="match status" value="1"/>
</dbReference>
<dbReference type="InterPro" id="IPR000568">
    <property type="entry name" value="ATP_synth_F0_asu"/>
</dbReference>
<dbReference type="InterPro" id="IPR023011">
    <property type="entry name" value="ATP_synth_F0_asu_AS"/>
</dbReference>
<dbReference type="InterPro" id="IPR045083">
    <property type="entry name" value="ATP_synth_F0_asu_bact/mt"/>
</dbReference>
<dbReference type="InterPro" id="IPR035908">
    <property type="entry name" value="F0_ATP_A_sf"/>
</dbReference>
<dbReference type="NCBIfam" id="TIGR01131">
    <property type="entry name" value="ATP_synt_6_or_A"/>
    <property type="match status" value="1"/>
</dbReference>
<dbReference type="PANTHER" id="PTHR11410">
    <property type="entry name" value="ATP SYNTHASE SUBUNIT A"/>
    <property type="match status" value="1"/>
</dbReference>
<dbReference type="PANTHER" id="PTHR11410:SF0">
    <property type="entry name" value="ATP SYNTHASE SUBUNIT A"/>
    <property type="match status" value="1"/>
</dbReference>
<dbReference type="Pfam" id="PF00119">
    <property type="entry name" value="ATP-synt_A"/>
    <property type="match status" value="1"/>
</dbReference>
<dbReference type="PRINTS" id="PR00123">
    <property type="entry name" value="ATPASEA"/>
</dbReference>
<dbReference type="SUPFAM" id="SSF81336">
    <property type="entry name" value="F1F0 ATP synthase subunit A"/>
    <property type="match status" value="1"/>
</dbReference>
<dbReference type="PROSITE" id="PS00449">
    <property type="entry name" value="ATPASE_A"/>
    <property type="match status" value="1"/>
</dbReference>
<feature type="chain" id="PRO_1000145277" description="ATP synthase subunit a">
    <location>
        <begin position="1"/>
        <end position="295"/>
    </location>
</feature>
<feature type="transmembrane region" description="Helical" evidence="1">
    <location>
        <begin position="41"/>
        <end position="61"/>
    </location>
</feature>
<feature type="transmembrane region" description="Helical" evidence="1">
    <location>
        <begin position="101"/>
        <end position="121"/>
    </location>
</feature>
<feature type="transmembrane region" description="Helical" evidence="1">
    <location>
        <begin position="129"/>
        <end position="149"/>
    </location>
</feature>
<feature type="transmembrane region" description="Helical" evidence="1">
    <location>
        <begin position="161"/>
        <end position="181"/>
    </location>
</feature>
<feature type="transmembrane region" description="Helical" evidence="1">
    <location>
        <begin position="191"/>
        <end position="211"/>
    </location>
</feature>
<feature type="transmembrane region" description="Helical" evidence="1">
    <location>
        <begin position="222"/>
        <end position="242"/>
    </location>
</feature>
<feature type="transmembrane region" description="Helical" evidence="1">
    <location>
        <begin position="244"/>
        <end position="264"/>
    </location>
</feature>
<reference key="1">
    <citation type="journal article" date="2007" name="Genome Res.">
        <title>Genome characteristics of facultatively symbiotic Frankia sp. strains reflect host range and host plant biogeography.</title>
        <authorList>
            <person name="Normand P."/>
            <person name="Lapierre P."/>
            <person name="Tisa L.S."/>
            <person name="Gogarten J.P."/>
            <person name="Alloisio N."/>
            <person name="Bagnarol E."/>
            <person name="Bassi C.A."/>
            <person name="Berry A.M."/>
            <person name="Bickhart D.M."/>
            <person name="Choisne N."/>
            <person name="Couloux A."/>
            <person name="Cournoyer B."/>
            <person name="Cruveiller S."/>
            <person name="Daubin V."/>
            <person name="Demange N."/>
            <person name="Francino M.P."/>
            <person name="Goltsman E."/>
            <person name="Huang Y."/>
            <person name="Kopp O.R."/>
            <person name="Labarre L."/>
            <person name="Lapidus A."/>
            <person name="Lavire C."/>
            <person name="Marechal J."/>
            <person name="Martinez M."/>
            <person name="Mastronunzio J.E."/>
            <person name="Mullin B.C."/>
            <person name="Niemann J."/>
            <person name="Pujic P."/>
            <person name="Rawnsley T."/>
            <person name="Rouy Z."/>
            <person name="Schenowitz C."/>
            <person name="Sellstedt A."/>
            <person name="Tavares F."/>
            <person name="Tomkins J.P."/>
            <person name="Vallenet D."/>
            <person name="Valverde C."/>
            <person name="Wall L.G."/>
            <person name="Wang Y."/>
            <person name="Medigue C."/>
            <person name="Benson D.R."/>
        </authorList>
    </citation>
    <scope>NUCLEOTIDE SEQUENCE [LARGE SCALE GENOMIC DNA]</scope>
    <source>
        <strain>EAN1pec</strain>
    </source>
</reference>